<accession>P63618</accession>
<accession>Q99U24</accession>
<keyword id="KW-0028">Amino-acid biosynthesis</keyword>
<keyword id="KW-0057">Aromatic amino acid biosynthesis</keyword>
<keyword id="KW-0170">Cobalt</keyword>
<keyword id="KW-0963">Cytoplasm</keyword>
<keyword id="KW-0456">Lyase</keyword>
<keyword id="KW-0479">Metal-binding</keyword>
<keyword id="KW-0520">NAD</keyword>
<keyword id="KW-0547">Nucleotide-binding</keyword>
<keyword id="KW-0862">Zinc</keyword>
<evidence type="ECO:0000255" key="1">
    <source>
        <dbReference type="HAMAP-Rule" id="MF_00110"/>
    </source>
</evidence>
<feature type="chain" id="PRO_0000140781" description="3-dehydroquinate synthase">
    <location>
        <begin position="1"/>
        <end position="354"/>
    </location>
</feature>
<feature type="binding site" evidence="1">
    <location>
        <begin position="100"/>
        <end position="104"/>
    </location>
    <ligand>
        <name>NAD(+)</name>
        <dbReference type="ChEBI" id="CHEBI:57540"/>
    </ligand>
</feature>
<feature type="binding site" evidence="1">
    <location>
        <begin position="124"/>
        <end position="125"/>
    </location>
    <ligand>
        <name>NAD(+)</name>
        <dbReference type="ChEBI" id="CHEBI:57540"/>
    </ligand>
</feature>
<feature type="binding site" evidence="1">
    <location>
        <position position="136"/>
    </location>
    <ligand>
        <name>NAD(+)</name>
        <dbReference type="ChEBI" id="CHEBI:57540"/>
    </ligand>
</feature>
<feature type="binding site" evidence="1">
    <location>
        <position position="145"/>
    </location>
    <ligand>
        <name>NAD(+)</name>
        <dbReference type="ChEBI" id="CHEBI:57540"/>
    </ligand>
</feature>
<feature type="binding site" evidence="1">
    <location>
        <begin position="163"/>
        <end position="166"/>
    </location>
    <ligand>
        <name>NAD(+)</name>
        <dbReference type="ChEBI" id="CHEBI:57540"/>
    </ligand>
</feature>
<feature type="binding site" evidence="1">
    <location>
        <position position="178"/>
    </location>
    <ligand>
        <name>Zn(2+)</name>
        <dbReference type="ChEBI" id="CHEBI:29105"/>
    </ligand>
</feature>
<feature type="binding site" evidence="1">
    <location>
        <position position="242"/>
    </location>
    <ligand>
        <name>Zn(2+)</name>
        <dbReference type="ChEBI" id="CHEBI:29105"/>
    </ligand>
</feature>
<feature type="binding site" evidence="1">
    <location>
        <position position="256"/>
    </location>
    <ligand>
        <name>Zn(2+)</name>
        <dbReference type="ChEBI" id="CHEBI:29105"/>
    </ligand>
</feature>
<organism>
    <name type="scientific">Staphylococcus aureus (strain N315)</name>
    <dbReference type="NCBI Taxonomy" id="158879"/>
    <lineage>
        <taxon>Bacteria</taxon>
        <taxon>Bacillati</taxon>
        <taxon>Bacillota</taxon>
        <taxon>Bacilli</taxon>
        <taxon>Bacillales</taxon>
        <taxon>Staphylococcaceae</taxon>
        <taxon>Staphylococcus</taxon>
    </lineage>
</organism>
<comment type="function">
    <text evidence="1">Catalyzes the conversion of 3-deoxy-D-arabino-heptulosonate 7-phosphate (DAHP) to dehydroquinate (DHQ).</text>
</comment>
<comment type="catalytic activity">
    <reaction evidence="1">
        <text>7-phospho-2-dehydro-3-deoxy-D-arabino-heptonate = 3-dehydroquinate + phosphate</text>
        <dbReference type="Rhea" id="RHEA:21968"/>
        <dbReference type="ChEBI" id="CHEBI:32364"/>
        <dbReference type="ChEBI" id="CHEBI:43474"/>
        <dbReference type="ChEBI" id="CHEBI:58394"/>
        <dbReference type="EC" id="4.2.3.4"/>
    </reaction>
</comment>
<comment type="cofactor">
    <cofactor evidence="1">
        <name>NAD(+)</name>
        <dbReference type="ChEBI" id="CHEBI:57540"/>
    </cofactor>
</comment>
<comment type="cofactor">
    <cofactor evidence="1">
        <name>Co(2+)</name>
        <dbReference type="ChEBI" id="CHEBI:48828"/>
    </cofactor>
    <cofactor evidence="1">
        <name>Zn(2+)</name>
        <dbReference type="ChEBI" id="CHEBI:29105"/>
    </cofactor>
    <text evidence="1">Binds 1 divalent metal cation per subunit. Can use either Co(2+) or Zn(2+).</text>
</comment>
<comment type="pathway">
    <text evidence="1">Metabolic intermediate biosynthesis; chorismate biosynthesis; chorismate from D-erythrose 4-phosphate and phosphoenolpyruvate: step 2/7.</text>
</comment>
<comment type="subcellular location">
    <subcellularLocation>
        <location evidence="1">Cytoplasm</location>
    </subcellularLocation>
</comment>
<comment type="similarity">
    <text evidence="1">Belongs to the sugar phosphate cyclases superfamily. Dehydroquinate synthase family.</text>
</comment>
<proteinExistence type="inferred from homology"/>
<name>AROB_STAAN</name>
<reference key="1">
    <citation type="journal article" date="2001" name="Lancet">
        <title>Whole genome sequencing of meticillin-resistant Staphylococcus aureus.</title>
        <authorList>
            <person name="Kuroda M."/>
            <person name="Ohta T."/>
            <person name="Uchiyama I."/>
            <person name="Baba T."/>
            <person name="Yuzawa H."/>
            <person name="Kobayashi I."/>
            <person name="Cui L."/>
            <person name="Oguchi A."/>
            <person name="Aoki K."/>
            <person name="Nagai Y."/>
            <person name="Lian J.-Q."/>
            <person name="Ito T."/>
            <person name="Kanamori M."/>
            <person name="Matsumaru H."/>
            <person name="Maruyama A."/>
            <person name="Murakami H."/>
            <person name="Hosoyama A."/>
            <person name="Mizutani-Ui Y."/>
            <person name="Takahashi N.K."/>
            <person name="Sawano T."/>
            <person name="Inoue R."/>
            <person name="Kaito C."/>
            <person name="Sekimizu K."/>
            <person name="Hirakawa H."/>
            <person name="Kuhara S."/>
            <person name="Goto S."/>
            <person name="Yabuzaki J."/>
            <person name="Kanehisa M."/>
            <person name="Yamashita A."/>
            <person name="Oshima K."/>
            <person name="Furuya K."/>
            <person name="Yoshino C."/>
            <person name="Shiba T."/>
            <person name="Hattori M."/>
            <person name="Ogasawara N."/>
            <person name="Hayashi H."/>
            <person name="Hiramatsu K."/>
        </authorList>
    </citation>
    <scope>NUCLEOTIDE SEQUENCE [LARGE SCALE GENOMIC DNA]</scope>
    <source>
        <strain>N315</strain>
    </source>
</reference>
<sequence length="354" mass="40237">MKLQTTYPSNNYPIFVEHGAIDHISTYIDQFDQSFILIDEHVNQYFADKFDDILSYENVHKVIIPAGEKTKTFEQYQETLEYILSHHVTRNTAIIAVGGGATGDFAGFVAATLLRGVHFIQVPTTILAHDSSVGGKVGINSKQGKNLIGAFYRPTAVIYDLDFLKTLPFEQILSGYAEVYKHALLNGESTTQEIEQHFKDREILQSLNGMDKYIAKGIETKLDIVVADEKEQGVRKFLNLGHTFGHAVEYNHKIAHGHAVMIGIIYQFIVANILFNSNHDIQHYINYLTKLGYPLETITDIDFETIYQYMLSDKKNDKQGVQMVLIKHFGDIVVQHIDQTTLQHACEQLKTYFK</sequence>
<gene>
    <name evidence="1" type="primary">aroB</name>
    <name type="ordered locus">SA1298</name>
</gene>
<protein>
    <recommendedName>
        <fullName evidence="1">3-dehydroquinate synthase</fullName>
        <shortName evidence="1">DHQS</shortName>
        <ecNumber evidence="1">4.2.3.4</ecNumber>
    </recommendedName>
</protein>
<dbReference type="EC" id="4.2.3.4" evidence="1"/>
<dbReference type="EMBL" id="BA000018">
    <property type="protein sequence ID" value="BAB42558.1"/>
    <property type="molecule type" value="Genomic_DNA"/>
</dbReference>
<dbReference type="PIR" id="A89925">
    <property type="entry name" value="A89925"/>
</dbReference>
<dbReference type="RefSeq" id="WP_000776312.1">
    <property type="nucleotide sequence ID" value="NC_002745.2"/>
</dbReference>
<dbReference type="SMR" id="P63618"/>
<dbReference type="EnsemblBacteria" id="BAB42558">
    <property type="protein sequence ID" value="BAB42558"/>
    <property type="gene ID" value="BAB42558"/>
</dbReference>
<dbReference type="KEGG" id="sau:SA1298"/>
<dbReference type="HOGENOM" id="CLU_001201_0_1_9"/>
<dbReference type="UniPathway" id="UPA00053">
    <property type="reaction ID" value="UER00085"/>
</dbReference>
<dbReference type="GO" id="GO:0005737">
    <property type="term" value="C:cytoplasm"/>
    <property type="evidence" value="ECO:0007669"/>
    <property type="project" value="UniProtKB-SubCell"/>
</dbReference>
<dbReference type="GO" id="GO:0003856">
    <property type="term" value="F:3-dehydroquinate synthase activity"/>
    <property type="evidence" value="ECO:0007669"/>
    <property type="project" value="UniProtKB-UniRule"/>
</dbReference>
<dbReference type="GO" id="GO:0046872">
    <property type="term" value="F:metal ion binding"/>
    <property type="evidence" value="ECO:0007669"/>
    <property type="project" value="UniProtKB-KW"/>
</dbReference>
<dbReference type="GO" id="GO:0000166">
    <property type="term" value="F:nucleotide binding"/>
    <property type="evidence" value="ECO:0007669"/>
    <property type="project" value="UniProtKB-KW"/>
</dbReference>
<dbReference type="GO" id="GO:0008652">
    <property type="term" value="P:amino acid biosynthetic process"/>
    <property type="evidence" value="ECO:0007669"/>
    <property type="project" value="UniProtKB-KW"/>
</dbReference>
<dbReference type="GO" id="GO:0009073">
    <property type="term" value="P:aromatic amino acid family biosynthetic process"/>
    <property type="evidence" value="ECO:0007669"/>
    <property type="project" value="UniProtKB-KW"/>
</dbReference>
<dbReference type="GO" id="GO:0009423">
    <property type="term" value="P:chorismate biosynthetic process"/>
    <property type="evidence" value="ECO:0007669"/>
    <property type="project" value="UniProtKB-UniRule"/>
</dbReference>
<dbReference type="FunFam" id="3.40.50.1970:FF:000019">
    <property type="entry name" value="3-dehydroquinate synthase"/>
    <property type="match status" value="1"/>
</dbReference>
<dbReference type="Gene3D" id="3.40.50.1970">
    <property type="match status" value="1"/>
</dbReference>
<dbReference type="Gene3D" id="1.20.1090.10">
    <property type="entry name" value="Dehydroquinate synthase-like - alpha domain"/>
    <property type="match status" value="1"/>
</dbReference>
<dbReference type="HAMAP" id="MF_00110">
    <property type="entry name" value="DHQ_synthase"/>
    <property type="match status" value="1"/>
</dbReference>
<dbReference type="InterPro" id="IPR050071">
    <property type="entry name" value="Dehydroquinate_synthase"/>
</dbReference>
<dbReference type="InterPro" id="IPR016037">
    <property type="entry name" value="DHQ_synth_AroB"/>
</dbReference>
<dbReference type="InterPro" id="IPR030963">
    <property type="entry name" value="DHQ_synth_fam"/>
</dbReference>
<dbReference type="InterPro" id="IPR030960">
    <property type="entry name" value="DHQS/DOIS_N"/>
</dbReference>
<dbReference type="InterPro" id="IPR056179">
    <property type="entry name" value="DHQS_C"/>
</dbReference>
<dbReference type="NCBIfam" id="TIGR01357">
    <property type="entry name" value="aroB"/>
    <property type="match status" value="1"/>
</dbReference>
<dbReference type="PANTHER" id="PTHR43622">
    <property type="entry name" value="3-DEHYDROQUINATE SYNTHASE"/>
    <property type="match status" value="1"/>
</dbReference>
<dbReference type="PANTHER" id="PTHR43622:SF7">
    <property type="entry name" value="3-DEHYDROQUINATE SYNTHASE, CHLOROPLASTIC"/>
    <property type="match status" value="1"/>
</dbReference>
<dbReference type="Pfam" id="PF01761">
    <property type="entry name" value="DHQ_synthase"/>
    <property type="match status" value="1"/>
</dbReference>
<dbReference type="Pfam" id="PF24621">
    <property type="entry name" value="DHQS_C"/>
    <property type="match status" value="1"/>
</dbReference>
<dbReference type="PIRSF" id="PIRSF001455">
    <property type="entry name" value="DHQ_synth"/>
    <property type="match status" value="1"/>
</dbReference>
<dbReference type="SUPFAM" id="SSF56796">
    <property type="entry name" value="Dehydroquinate synthase-like"/>
    <property type="match status" value="1"/>
</dbReference>